<sequence>MDYLHVYNNNQAHVPRTPPGRQCLSPVLPPIILALDQQHSLTFGYSSPRCLPTPILPSMSTNTPVHWSQQVVTIPVAVRNHAAMMPIITPMTSPRPQFEATAPSPPLAPVAIKLPDLKLPPSPVPSTVEDRVSHPILPKIVIGNGGGRDVERDSTEELIRKIPNYIGCAKTKAQLSKVRSGKQLIACAQEYHHPVNKDEIENINNILNFRDFIFKHPKSSFEFLCTLSFEQFVRVYSFISFIYRTKKINKNKYELVCEMNVHEQLSNKRIQRTRTPEKYKIHLICESKLILTFNHCTKTVKFESINGGHCHPISANHIIKPSLFLTHCINKCYQTVSDPTDLKLALRDALEALDHERIGLSFLKRRHFKCSHQASSLSNASATLKKQEDHDTFGVHTGIIHTANFFMFNASSDIFQRN</sequence>
<proteinExistence type="predicted"/>
<gene>
    <name type="ordered locus">YML083C</name>
</gene>
<feature type="chain" id="PRO_0000203247" description="Putative uncharacterized protein YML083C">
    <location>
        <begin position="1"/>
        <end position="418"/>
    </location>
</feature>
<reference key="1">
    <citation type="journal article" date="1997" name="Nature">
        <title>The nucleotide sequence of Saccharomyces cerevisiae chromosome XIII.</title>
        <authorList>
            <person name="Bowman S."/>
            <person name="Churcher C.M."/>
            <person name="Badcock K."/>
            <person name="Brown D."/>
            <person name="Chillingworth T."/>
            <person name="Connor R."/>
            <person name="Dedman K."/>
            <person name="Devlin K."/>
            <person name="Gentles S."/>
            <person name="Hamlin N."/>
            <person name="Hunt S."/>
            <person name="Jagels K."/>
            <person name="Lye G."/>
            <person name="Moule S."/>
            <person name="Odell C."/>
            <person name="Pearson D."/>
            <person name="Rajandream M.A."/>
            <person name="Rice P."/>
            <person name="Skelton J."/>
            <person name="Walsh S.V."/>
            <person name="Whitehead S."/>
            <person name="Barrell B.G."/>
        </authorList>
    </citation>
    <scope>NUCLEOTIDE SEQUENCE [LARGE SCALE GENOMIC DNA]</scope>
    <source>
        <strain>ATCC 204508 / S288c</strain>
    </source>
</reference>
<reference key="2">
    <citation type="journal article" date="2014" name="G3 (Bethesda)">
        <title>The reference genome sequence of Saccharomyces cerevisiae: Then and now.</title>
        <authorList>
            <person name="Engel S.R."/>
            <person name="Dietrich F.S."/>
            <person name="Fisk D.G."/>
            <person name="Binkley G."/>
            <person name="Balakrishnan R."/>
            <person name="Costanzo M.C."/>
            <person name="Dwight S.S."/>
            <person name="Hitz B.C."/>
            <person name="Karra K."/>
            <person name="Nash R.S."/>
            <person name="Weng S."/>
            <person name="Wong E.D."/>
            <person name="Lloyd P."/>
            <person name="Skrzypek M.S."/>
            <person name="Miyasato S.R."/>
            <person name="Simison M."/>
            <person name="Cherry J.M."/>
        </authorList>
    </citation>
    <scope>GENOME REANNOTATION</scope>
    <source>
        <strain>ATCC 204508 / S288c</strain>
    </source>
</reference>
<reference key="3">
    <citation type="journal article" date="2007" name="Genome Res.">
        <title>Approaching a complete repository of sequence-verified protein-encoding clones for Saccharomyces cerevisiae.</title>
        <authorList>
            <person name="Hu Y."/>
            <person name="Rolfs A."/>
            <person name="Bhullar B."/>
            <person name="Murthy T.V.S."/>
            <person name="Zhu C."/>
            <person name="Berger M.F."/>
            <person name="Camargo A.A."/>
            <person name="Kelley F."/>
            <person name="McCarron S."/>
            <person name="Jepson D."/>
            <person name="Richardson A."/>
            <person name="Raphael J."/>
            <person name="Moreira D."/>
            <person name="Taycher E."/>
            <person name="Zuo D."/>
            <person name="Mohr S."/>
            <person name="Kane M.F."/>
            <person name="Williamson J."/>
            <person name="Simpson A.J.G."/>
            <person name="Bulyk M.L."/>
            <person name="Harlow E."/>
            <person name="Marsischky G."/>
            <person name="Kolodner R.D."/>
            <person name="LaBaer J."/>
        </authorList>
    </citation>
    <scope>NUCLEOTIDE SEQUENCE [GENOMIC DNA]</scope>
    <source>
        <strain>ATCC 204508 / S288c</strain>
    </source>
</reference>
<dbReference type="EMBL" id="Z46660">
    <property type="protein sequence ID" value="CAA86655.1"/>
    <property type="molecule type" value="Genomic_DNA"/>
</dbReference>
<dbReference type="EMBL" id="AY692582">
    <property type="protein sequence ID" value="AAT92601.1"/>
    <property type="molecule type" value="Genomic_DNA"/>
</dbReference>
<dbReference type="EMBL" id="BK006946">
    <property type="protein sequence ID" value="DAA09813.1"/>
    <property type="molecule type" value="Genomic_DNA"/>
</dbReference>
<dbReference type="PIR" id="S49643">
    <property type="entry name" value="S49643"/>
</dbReference>
<dbReference type="RefSeq" id="NP_013627.1">
    <property type="nucleotide sequence ID" value="NM_001182442.1"/>
</dbReference>
<dbReference type="SMR" id="Q04526"/>
<dbReference type="BioGRID" id="35057">
    <property type="interactions" value="21"/>
</dbReference>
<dbReference type="FunCoup" id="Q04526">
    <property type="interactions" value="41"/>
</dbReference>
<dbReference type="IntAct" id="Q04526">
    <property type="interactions" value="1"/>
</dbReference>
<dbReference type="STRING" id="4932.YML083C"/>
<dbReference type="PaxDb" id="4932-YML083C"/>
<dbReference type="EnsemblFungi" id="YML083C_mRNA">
    <property type="protein sequence ID" value="YML083C"/>
    <property type="gene ID" value="YML083C"/>
</dbReference>
<dbReference type="GeneID" id="854891"/>
<dbReference type="KEGG" id="sce:YML083C"/>
<dbReference type="AGR" id="SGD:S000004548"/>
<dbReference type="SGD" id="S000004548">
    <property type="gene designation" value="YML083C"/>
</dbReference>
<dbReference type="VEuPathDB" id="FungiDB:YML083C"/>
<dbReference type="eggNOG" id="ENOG502SXY3">
    <property type="taxonomic scope" value="Eukaryota"/>
</dbReference>
<dbReference type="HOGENOM" id="CLU_657578_0_0_1"/>
<dbReference type="InParanoid" id="Q04526"/>
<dbReference type="OMA" id="IACAQEY"/>
<dbReference type="OrthoDB" id="4050157at2759"/>
<dbReference type="BioCyc" id="YEAST:G3O-32673-MONOMER"/>
<dbReference type="BioGRID-ORCS" id="854891">
    <property type="hits" value="2 hits in 10 CRISPR screens"/>
</dbReference>
<dbReference type="PRO" id="PR:Q04526"/>
<dbReference type="Proteomes" id="UP000002311">
    <property type="component" value="Chromosome XIII"/>
</dbReference>
<dbReference type="RNAct" id="Q04526">
    <property type="molecule type" value="protein"/>
</dbReference>
<accession>Q04526</accession>
<accession>D6W0J9</accession>
<organism>
    <name type="scientific">Saccharomyces cerevisiae (strain ATCC 204508 / S288c)</name>
    <name type="common">Baker's yeast</name>
    <dbReference type="NCBI Taxonomy" id="559292"/>
    <lineage>
        <taxon>Eukaryota</taxon>
        <taxon>Fungi</taxon>
        <taxon>Dikarya</taxon>
        <taxon>Ascomycota</taxon>
        <taxon>Saccharomycotina</taxon>
        <taxon>Saccharomycetes</taxon>
        <taxon>Saccharomycetales</taxon>
        <taxon>Saccharomycetaceae</taxon>
        <taxon>Saccharomyces</taxon>
    </lineage>
</organism>
<keyword id="KW-1185">Reference proteome</keyword>
<name>YMI3_YEAST</name>
<protein>
    <recommendedName>
        <fullName>Putative uncharacterized protein YML083C</fullName>
    </recommendedName>
</protein>